<gene>
    <name type="primary">HBAA</name>
</gene>
<organism>
    <name type="scientific">Trigonoceps occipitalis</name>
    <name type="common">White-headed vulture</name>
    <name type="synonym">Aegypius occipitalis</name>
    <dbReference type="NCBI Taxonomy" id="8975"/>
    <lineage>
        <taxon>Eukaryota</taxon>
        <taxon>Metazoa</taxon>
        <taxon>Chordata</taxon>
        <taxon>Craniata</taxon>
        <taxon>Vertebrata</taxon>
        <taxon>Euteleostomi</taxon>
        <taxon>Archelosauria</taxon>
        <taxon>Archosauria</taxon>
        <taxon>Dinosauria</taxon>
        <taxon>Saurischia</taxon>
        <taxon>Theropoda</taxon>
        <taxon>Coelurosauria</taxon>
        <taxon>Aves</taxon>
        <taxon>Neognathae</taxon>
        <taxon>Neoaves</taxon>
        <taxon>Telluraves</taxon>
        <taxon>Accipitrimorphae</taxon>
        <taxon>Accipitriformes</taxon>
        <taxon>Accipitridae</taxon>
        <taxon>Accipitrinae</taxon>
        <taxon>Trigonoceps</taxon>
    </lineage>
</organism>
<name>HBA_TRIOC</name>
<protein>
    <recommendedName>
        <fullName>Hemoglobin subunit alpha-A</fullName>
    </recommendedName>
    <alternativeName>
        <fullName>Alpha-A-globin</fullName>
    </alternativeName>
    <alternativeName>
        <fullName>Hemoglobin alpha-A chain</fullName>
    </alternativeName>
</protein>
<keyword id="KW-0903">Direct protein sequencing</keyword>
<keyword id="KW-0349">Heme</keyword>
<keyword id="KW-0408">Iron</keyword>
<keyword id="KW-0479">Metal-binding</keyword>
<keyword id="KW-0561">Oxygen transport</keyword>
<keyword id="KW-0813">Transport</keyword>
<reference key="1">
    <citation type="journal article" date="1989" name="Biol. Chem. Hoppe-Seyler">
        <title>High-altitude respiration of falconiformes. The primary structures and functional properties of the major and minor hemoglobin components of the adult White-Headed Vulture (Trigonoceps occipitalis, Aegypiinae).</title>
        <authorList>
            <person name="Hiebl I."/>
            <person name="Weber R.E."/>
            <person name="Schneeganss D."/>
            <person name="Braunitzer G."/>
        </authorList>
    </citation>
    <scope>PROTEIN SEQUENCE</scope>
</reference>
<comment type="function">
    <text>Involved in oxygen transport from the lung to the various peripheral tissues.</text>
</comment>
<comment type="subunit">
    <text>Heterotetramer of two alpha chains and two beta chains.</text>
</comment>
<comment type="tissue specificity">
    <text>Red blood cells.</text>
</comment>
<comment type="similarity">
    <text evidence="1">Belongs to the globin family.</text>
</comment>
<dbReference type="PIR" id="S04949">
    <property type="entry name" value="HAGRAW"/>
</dbReference>
<dbReference type="SMR" id="P19832"/>
<dbReference type="GO" id="GO:0072562">
    <property type="term" value="C:blood microparticle"/>
    <property type="evidence" value="ECO:0007669"/>
    <property type="project" value="TreeGrafter"/>
</dbReference>
<dbReference type="GO" id="GO:0031838">
    <property type="term" value="C:haptoglobin-hemoglobin complex"/>
    <property type="evidence" value="ECO:0007669"/>
    <property type="project" value="TreeGrafter"/>
</dbReference>
<dbReference type="GO" id="GO:0005833">
    <property type="term" value="C:hemoglobin complex"/>
    <property type="evidence" value="ECO:0007669"/>
    <property type="project" value="InterPro"/>
</dbReference>
<dbReference type="GO" id="GO:0031720">
    <property type="term" value="F:haptoglobin binding"/>
    <property type="evidence" value="ECO:0007669"/>
    <property type="project" value="TreeGrafter"/>
</dbReference>
<dbReference type="GO" id="GO:0020037">
    <property type="term" value="F:heme binding"/>
    <property type="evidence" value="ECO:0007669"/>
    <property type="project" value="InterPro"/>
</dbReference>
<dbReference type="GO" id="GO:0005506">
    <property type="term" value="F:iron ion binding"/>
    <property type="evidence" value="ECO:0007669"/>
    <property type="project" value="InterPro"/>
</dbReference>
<dbReference type="GO" id="GO:0043177">
    <property type="term" value="F:organic acid binding"/>
    <property type="evidence" value="ECO:0007669"/>
    <property type="project" value="TreeGrafter"/>
</dbReference>
<dbReference type="GO" id="GO:0019825">
    <property type="term" value="F:oxygen binding"/>
    <property type="evidence" value="ECO:0007669"/>
    <property type="project" value="InterPro"/>
</dbReference>
<dbReference type="GO" id="GO:0005344">
    <property type="term" value="F:oxygen carrier activity"/>
    <property type="evidence" value="ECO:0007669"/>
    <property type="project" value="UniProtKB-KW"/>
</dbReference>
<dbReference type="GO" id="GO:0004601">
    <property type="term" value="F:peroxidase activity"/>
    <property type="evidence" value="ECO:0007669"/>
    <property type="project" value="TreeGrafter"/>
</dbReference>
<dbReference type="GO" id="GO:0042744">
    <property type="term" value="P:hydrogen peroxide catabolic process"/>
    <property type="evidence" value="ECO:0007669"/>
    <property type="project" value="TreeGrafter"/>
</dbReference>
<dbReference type="CDD" id="cd08927">
    <property type="entry name" value="Hb-alpha-like"/>
    <property type="match status" value="1"/>
</dbReference>
<dbReference type="FunFam" id="1.10.490.10:FF:000002">
    <property type="entry name" value="Hemoglobin subunit alpha"/>
    <property type="match status" value="1"/>
</dbReference>
<dbReference type="Gene3D" id="1.10.490.10">
    <property type="entry name" value="Globins"/>
    <property type="match status" value="1"/>
</dbReference>
<dbReference type="InterPro" id="IPR000971">
    <property type="entry name" value="Globin"/>
</dbReference>
<dbReference type="InterPro" id="IPR009050">
    <property type="entry name" value="Globin-like_sf"/>
</dbReference>
<dbReference type="InterPro" id="IPR012292">
    <property type="entry name" value="Globin/Proto"/>
</dbReference>
<dbReference type="InterPro" id="IPR002338">
    <property type="entry name" value="Hemoglobin_a-typ"/>
</dbReference>
<dbReference type="InterPro" id="IPR050056">
    <property type="entry name" value="Hemoglobin_oxygen_transport"/>
</dbReference>
<dbReference type="InterPro" id="IPR002339">
    <property type="entry name" value="Hemoglobin_pi"/>
</dbReference>
<dbReference type="PANTHER" id="PTHR11442">
    <property type="entry name" value="HEMOGLOBIN FAMILY MEMBER"/>
    <property type="match status" value="1"/>
</dbReference>
<dbReference type="PANTHER" id="PTHR11442:SF48">
    <property type="entry name" value="HEMOGLOBIN SUBUNIT ALPHA"/>
    <property type="match status" value="1"/>
</dbReference>
<dbReference type="Pfam" id="PF00042">
    <property type="entry name" value="Globin"/>
    <property type="match status" value="1"/>
</dbReference>
<dbReference type="PRINTS" id="PR00612">
    <property type="entry name" value="ALPHAHAEM"/>
</dbReference>
<dbReference type="PRINTS" id="PR00815">
    <property type="entry name" value="PIHAEM"/>
</dbReference>
<dbReference type="SUPFAM" id="SSF46458">
    <property type="entry name" value="Globin-like"/>
    <property type="match status" value="1"/>
</dbReference>
<dbReference type="PROSITE" id="PS01033">
    <property type="entry name" value="GLOBIN"/>
    <property type="match status" value="1"/>
</dbReference>
<proteinExistence type="evidence at protein level"/>
<evidence type="ECO:0000255" key="1">
    <source>
        <dbReference type="PROSITE-ProRule" id="PRU00238"/>
    </source>
</evidence>
<feature type="chain" id="PRO_0000052792" description="Hemoglobin subunit alpha-A">
    <location>
        <begin position="1"/>
        <end position="141"/>
    </location>
</feature>
<feature type="domain" description="Globin" evidence="1">
    <location>
        <begin position="1"/>
        <end position="141"/>
    </location>
</feature>
<feature type="binding site" evidence="1">
    <location>
        <position position="58"/>
    </location>
    <ligand>
        <name>O2</name>
        <dbReference type="ChEBI" id="CHEBI:15379"/>
    </ligand>
</feature>
<feature type="binding site" description="proximal binding residue" evidence="1">
    <location>
        <position position="87"/>
    </location>
    <ligand>
        <name>heme b</name>
        <dbReference type="ChEBI" id="CHEBI:60344"/>
    </ligand>
    <ligandPart>
        <name>Fe</name>
        <dbReference type="ChEBI" id="CHEBI:18248"/>
    </ligandPart>
</feature>
<sequence length="141" mass="15468">VLSANDKTNVKTVFTKITGHAEDYGAETLERMFITYPPTKTYFPHFDLHHGSAQIKAHGKKVVGALIEAVNHIDDIAGALSKLSDLHAQKLRVDPVNFKLLGQCFLVVVAIHHPSVLTPEVHASLDKFLCAVGNVLSAKYR</sequence>
<accession>P19832</accession>